<feature type="transit peptide" description="Mitochondrion" evidence="25 40 58">
    <location>
        <begin position="1"/>
        <end position="73"/>
    </location>
</feature>
<feature type="chain" id="PRO_0000018590" description="Complement component 1 Q subcomponent-binding protein, mitochondrial">
    <location>
        <begin position="74"/>
        <end position="282"/>
    </location>
</feature>
<feature type="region of interest" description="C1q binding">
    <location>
        <begin position="76"/>
        <end position="93"/>
    </location>
</feature>
<feature type="region of interest" description="Disordered" evidence="3">
    <location>
        <begin position="138"/>
        <end position="164"/>
    </location>
</feature>
<feature type="region of interest" description="Interaction with MAVS" evidence="28">
    <location>
        <begin position="168"/>
        <end position="213"/>
    </location>
</feature>
<feature type="modified residue" description="Phosphoserine" evidence="56">
    <location>
        <position position="87"/>
    </location>
</feature>
<feature type="modified residue" description="N6-acetyllysine" evidence="54">
    <location>
        <position position="91"/>
    </location>
</feature>
<feature type="modified residue" description="Phosphotyrosine" evidence="52 55">
    <location>
        <position position="188"/>
    </location>
</feature>
<feature type="modified residue" description="Phosphoserine" evidence="53">
    <location>
        <position position="201"/>
    </location>
</feature>
<feature type="modified residue" description="Phosphoserine" evidence="57">
    <location>
        <position position="205"/>
    </location>
</feature>
<feature type="modified residue" description="Phosphothreonine" evidence="57">
    <location>
        <position position="214"/>
    </location>
</feature>
<feature type="sequence variant" id="VAR_080391" description="In COXPD33; uncertain significance; dbSNP:rs748497469." evidence="35">
    <original>C</original>
    <variation>S</variation>
    <location>
        <position position="186"/>
    </location>
</feature>
<feature type="sequence variant" id="VAR_080392" description="In COXPD33; uncertain significance; dbSNP:rs755568057." evidence="35">
    <location>
        <position position="188"/>
    </location>
</feature>
<feature type="sequence variant" id="VAR_080393" description="In COXPD33; uncertain significance; dbSNP:rs767427194." evidence="35">
    <original>F</original>
    <variation>L</variation>
    <location>
        <position position="204"/>
    </location>
</feature>
<feature type="sequence variant" id="VAR_080394" description="In COXPD33; dbSNP:rs1394499137." evidence="35">
    <original>G</original>
    <variation>W</variation>
    <location>
        <position position="247"/>
    </location>
</feature>
<feature type="sequence variant" id="VAR_080395" description="In COXPD33; uncertain significance; dbSNP:rs1555532484." evidence="35">
    <original>L</original>
    <variation>F</variation>
    <location>
        <position position="275"/>
    </location>
</feature>
<feature type="sequence variant" id="VAR_080396" description="In COXPD33; dbSNP:rs1555532483." evidence="35">
    <original>L</original>
    <variation>P</variation>
    <location>
        <position position="275"/>
    </location>
</feature>
<feature type="mutagenesis site" description="Impairs HIV RNA splicing in mouse cells." evidence="15">
    <original>G</original>
    <variation>D</variation>
    <location>
        <position position="107"/>
    </location>
</feature>
<feature type="helix" evidence="62">
    <location>
        <begin position="77"/>
        <end position="95"/>
    </location>
</feature>
<feature type="turn" evidence="62">
    <location>
        <begin position="106"/>
        <end position="108"/>
    </location>
</feature>
<feature type="strand" evidence="62">
    <location>
        <begin position="110"/>
        <end position="114"/>
    </location>
</feature>
<feature type="strand" evidence="62">
    <location>
        <begin position="117"/>
        <end position="123"/>
    </location>
</feature>
<feature type="strand" evidence="62">
    <location>
        <begin position="125"/>
        <end position="134"/>
    </location>
</feature>
<feature type="strand" evidence="62">
    <location>
        <begin position="167"/>
        <end position="174"/>
    </location>
</feature>
<feature type="helix" evidence="59">
    <location>
        <begin position="175"/>
        <end position="177"/>
    </location>
</feature>
<feature type="strand" evidence="62">
    <location>
        <begin position="180"/>
        <end position="187"/>
    </location>
</feature>
<feature type="strand" evidence="61">
    <location>
        <begin position="199"/>
        <end position="201"/>
    </location>
</feature>
<feature type="strand" evidence="62">
    <location>
        <begin position="206"/>
        <end position="213"/>
    </location>
</feature>
<feature type="strand" evidence="62">
    <location>
        <begin position="225"/>
        <end position="227"/>
    </location>
</feature>
<feature type="helix" evidence="60">
    <location>
        <begin position="228"/>
        <end position="230"/>
    </location>
</feature>
<feature type="helix" evidence="62">
    <location>
        <begin position="233"/>
        <end position="245"/>
    </location>
</feature>
<feature type="helix" evidence="62">
    <location>
        <begin position="250"/>
        <end position="280"/>
    </location>
</feature>
<comment type="function">
    <text evidence="1 4 5 6 9 11 17 18 19 22 23 26 27 28 29 31 32 34 35 36 38 39 40 41 47">Multifunctional and multicompartmental protein involved in inflammation and infection processes, ribosome biogenesis, protein synthesis in mitochondria, regulation of apoptosis, transcriptional regulation and pre-mRNA splicing (PubMed:10022843, PubMed:10479529, PubMed:10722602, PubMed:11086025, PubMed:11859136, PubMed:15243141, PubMed:16140380, PubMed:16177118, PubMed:17881511, PubMed:18676636, PubMed:19004836, PubMed:19164550, PubMed:20810993, PubMed:21536856, PubMed:21544310, PubMed:22700724, PubMed:28942965, PubMed:8662673, PubMed:8710908, PubMed:9461517). At the cell surface is thought to act as an endothelial receptor for plasma proteins of the complement and kallikrein-kinin cascades (PubMed:10479529, PubMed:11859136, PubMed:8662673, PubMed:8710908). Putative receptor for C1q; specifically binds to the globular 'heads' of C1q thus inhibiting C1; may perform the receptor function through a complex with C1qR/CD93 (PubMed:20810993, PubMed:8195709). In complex with cytokeratin-1/KRT1 is a high affinity receptor for kininogen-1/HMWK (PubMed:21544310). Can also bind other plasma proteins, such as coagulation factor XII leading to its autoactivation. May function to bind initially fluid kininogen-1 to the cell membrane. The secreted form may enhance both extrinsic and intrinsic coagulation pathways. It is postulated that the cell surface form requires docking with transmembrane proteins for downstream signaling which might be specific for a cell-type or response. By acting as C1q receptor is involved in chemotaxis of immature dendritic cells and neutrophils and is proposed to signal through CD209/DC-SIGN on immature dendritic cells, through integrin alpha-4/beta-1 during trophoblast invasion of the decidua, and through integrin beta-1 during endothelial cell adhesion and spreading (PubMed:16140380, PubMed:22700724, PubMed:9461517). Signaling involved in inhibition of innate immune response is implicating the PI3K-AKT/PKB pathway (PubMed:16177118). Required for protein synthesis in mitochondria (PubMed:28942965). In mitochondrial translation may be involved in formation of functional 55S mitoribosomes; the function seems to involve its RNA-binding activity (By similarity). Acts as a RNA modification reader, which specifically recognizes and binds mitochondrial RNAs modified by C5-methylcytosine (m5C) in response to stress, and promotes recruitment of the mitochondrial degradosome complex, leading to their degradation (PubMed:39019044). May be involved in the nucleolar ribosome maturation process; the function may involve the exchange of FBL for RRP1 in the association with pre-ribosome particles (By similarity). Involved in regulation of RNA splicing by inhibiting the RNA-binding capacity of SRSF1 and its phosphorylation (PubMed:10022843, PubMed:21536856). Is required for the nuclear translocation of splicing factor U2AF1L4 (By similarity). Involved in regulation of CDKN2A- and HRK-mediated apoptosis. Stabilizes mitochondrial CDKN2A isoform smARF (PubMed:17486078). May be involved in regulation of FOXC1 transcriptional activity and NFY/CCAAT-binding factor complex-mediated transcription (PubMed:15243141, PubMed:18676636). May play a role in antibacterial defense as it can bind to cell surface hyaluronan and inhibit Streptococcus pneumoniae hyaluronate lyase (PubMed:19004836). May be involved in modulation of the immune response; ligation by HCV core protein is resulting in suppression of interleukin-12 production in monocyte-derived dendritic cells (PubMed:11086025, PubMed:17881511). Involved in regulation of antiviral response by inhibiting RIGI- and IFIH1-mediated signaling pathways probably involving its association with MAVS after viral infection (PubMed:19164550). Acts as a regulator of DNA repair via homologous recombination by inhibiting the activity of MRE11: interacts with unphosphorylated MRE11 and RAD50 in absence of DNA damage, preventing formation and activity of the MRN complex. Following DNA damage, dissociates from phosphorylated MRE11, allowing formation of the MRN complex (PubMed:31353207).</text>
</comment>
<comment type="function">
    <text evidence="15">(Microbial infection) Involved in HIV-1 replication, presumably by contributing to splicing of viral RNA.</text>
</comment>
<comment type="function">
    <text evidence="6 7 13">(Microbial infection) In infection processes acts as an attachment site for microbial proteins, including Listeria monocytogenes internalin B (InlB) and Staphylococcus aureus protein A.</text>
</comment>
<comment type="function">
    <text evidence="12">(Microbial infection) Involved in replication of Rubella virus.</text>
</comment>
<comment type="subunit">
    <text evidence="1 2 4 9 16 17 21 22 24 26 28 30 31 32 34 36 37 42 44">Homotrimer; three monomers form a donut-shaped structure with an unusually asymmetric charge distribution on the surface. Interacts with CDK13, HRK, VTN, NFYB, ADRA1B, FOXC1, DDX21, DDX50, NCL, SRSF1, SRSF9 and CDKN2A isoform smARF. Interacts with CD93; the association may represent a cell surface C1q receptor. Interacts with KRT1; the association represents a cell surface kininogen receptor. Interacts with CD209; the interaction is indicative for a C1q:C1QBP:CD209 signaling complex. Interacts with FBL and RRP1; the respective interactions with C1QBP are competitive. Probably associates with the mitoribosome. Interacts with MAVS; the interaction occurs upon viral transfection. Interacts with PPIF. Interacts with U2AF1L4. Interacts with PLEKHN1 (PubMed:18191643). Interacts with VGF-derived peptide TLQP-21 (By similarity). Interacts with POLGARF which is produced from an alternative reading frame of the POLG gene; the interaction results in nucleolar localization of C1QBP, probably due to prevention of C1QBP maturation and redirection from mitochondria to nucleoli (PubMed:32958672). Interacts with MRE11 and RAD50; forming the MRC (MRE11-RAD50-C1QBP) complex that inhibits the activity of MRE11 (PubMed:31353207).</text>
</comment>
<comment type="subunit">
    <text evidence="8 12 33">(Microbial infection) Interacts with Rubella virus capsid protein; the interaction occurs in mitochondria (PubMed:10823864, PubMed:12034482). Interacts with Rubella virus protease/methyltransferase p150 (PubMed:22238231).</text>
</comment>
<comment type="subunit">
    <text evidence="6">(Microbial infection) Interacts with Staphylococcus aureus protein A/spa.</text>
</comment>
<comment type="subunit">
    <text evidence="6">(Microbial infection) Interacts with Staphylococcus aureus protein A/spa, HIV-1 Tat and HCV core protein.</text>
</comment>
<comment type="subunit">
    <text evidence="20">(Microbial infection) Interacts with HIV-1 Tat and HCV core protein.</text>
</comment>
<comment type="subunit">
    <text evidence="7 13">(Microbial infection) Interacts with L.monocytogenes internalin B.</text>
</comment>
<comment type="subunit">
    <text evidence="45">(Microbial infection) Interacts with Epstein-Barr virus EBNA1.</text>
</comment>
<comment type="interaction">
    <interactant intactId="EBI-347528">
        <id>Q07021</id>
    </interactant>
    <interactant intactId="EBI-701692">
        <id>P02647</id>
        <label>APOA1</label>
    </interactant>
    <organismsDiffer>false</organismsDiffer>
    <experiments>2</experiments>
</comment>
<comment type="interaction">
    <interactant intactId="EBI-347528">
        <id>Q07021</id>
    </interactant>
    <interactant intactId="EBI-6375898">
        <id>Q14004-2</id>
        <label>CDK13</label>
    </interactant>
    <organismsDiffer>false</organismsDiffer>
    <experiments>6</experiments>
</comment>
<comment type="interaction">
    <interactant intactId="EBI-347528">
        <id>Q07021</id>
    </interactant>
    <interactant intactId="EBI-625922">
        <id>Q8N726</id>
        <label>CDKN2A</label>
    </interactant>
    <organismsDiffer>false</organismsDiffer>
    <experiments>3</experiments>
</comment>
<comment type="interaction">
    <interactant intactId="EBI-347528">
        <id>Q07021</id>
    </interactant>
    <interactant intactId="EBI-11599882">
        <id>Q6RFH8</id>
        <label>DUX4L9</label>
    </interactant>
    <organismsDiffer>false</organismsDiffer>
    <experiments>3</experiments>
</comment>
<comment type="interaction">
    <interactant intactId="EBI-347528">
        <id>Q07021</id>
    </interactant>
    <interactant intactId="EBI-6378830">
        <id>P00748</id>
        <label>F12</label>
    </interactant>
    <organismsDiffer>false</organismsDiffer>
    <experiments>2</experiments>
</comment>
<comment type="interaction">
    <interactant intactId="EBI-347528">
        <id>Q07021</id>
    </interactant>
    <interactant intactId="EBI-1175253">
        <id>Q12948</id>
        <label>FOXC1</label>
    </interactant>
    <organismsDiffer>false</organismsDiffer>
    <experiments>6</experiments>
</comment>
<comment type="interaction">
    <interactant intactId="EBI-347528">
        <id>Q07021</id>
    </interactant>
    <interactant intactId="EBI-701322">
        <id>O00198</id>
        <label>HRK</label>
    </interactant>
    <organismsDiffer>false</organismsDiffer>
    <experiments>7</experiments>
</comment>
<comment type="interaction">
    <interactant intactId="EBI-347528">
        <id>Q07021</id>
    </interactant>
    <interactant intactId="EBI-8284732">
        <id>Q13351</id>
        <label>KLF1</label>
    </interactant>
    <organismsDiffer>false</organismsDiffer>
    <experiments>3</experiments>
</comment>
<comment type="interaction">
    <interactant intactId="EBI-347528">
        <id>Q07021</id>
    </interactant>
    <interactant intactId="EBI-6378713">
        <id>P01042</id>
        <label>KNG1</label>
    </interactant>
    <organismsDiffer>false</organismsDiffer>
    <experiments>4</experiments>
</comment>
<comment type="interaction">
    <interactant intactId="EBI-347528">
        <id>Q07021</id>
    </interactant>
    <interactant intactId="EBI-1055147">
        <id>Q14739</id>
        <label>LBR</label>
    </interactant>
    <organismsDiffer>false</organismsDiffer>
    <experiments>2</experiments>
</comment>
<comment type="interaction">
    <interactant intactId="EBI-347528">
        <id>Q07021</id>
    </interactant>
    <interactant intactId="EBI-995373">
        <id>Q7Z434</id>
        <label>MAVS</label>
    </interactant>
    <organismsDiffer>false</organismsDiffer>
    <experiments>5</experiments>
</comment>
<comment type="interaction">
    <interactant intactId="EBI-347528">
        <id>Q07021</id>
    </interactant>
    <interactant intactId="EBI-295351">
        <id>Q05513</id>
        <label>PRKCZ</label>
    </interactant>
    <organismsDiffer>false</organismsDiffer>
    <experiments>4</experiments>
</comment>
<comment type="interaction">
    <interactant intactId="EBI-347528">
        <id>Q07021</id>
    </interactant>
    <interactant intactId="EBI-1181072">
        <id>Q15139</id>
        <label>PRKD1</label>
    </interactant>
    <organismsDiffer>false</organismsDiffer>
    <experiments>9</experiments>
</comment>
<comment type="interaction">
    <interactant intactId="EBI-347528">
        <id>Q07021</id>
    </interactant>
    <interactant intactId="EBI-20628340">
        <id>Q8N3Z0</id>
        <label>PRSS35</label>
    </interactant>
    <organismsDiffer>false</organismsDiffer>
    <experiments>4</experiments>
</comment>
<comment type="interaction">
    <interactant intactId="EBI-347528">
        <id>Q07021</id>
    </interactant>
    <interactant intactId="EBI-1036653">
        <id>P04004</id>
        <label>VTN</label>
    </interactant>
    <organismsDiffer>false</organismsDiffer>
    <experiments>10</experiments>
</comment>
<comment type="interaction">
    <interactant intactId="EBI-347528">
        <id>Q07021</id>
    </interactant>
    <interactant intactId="EBI-354065">
        <id>P67809</id>
        <label>YBX1</label>
    </interactant>
    <organismsDiffer>false</organismsDiffer>
    <experiments>13</experiments>
</comment>
<comment type="interaction">
    <interactant intactId="EBI-347528">
        <id>Q07021</id>
    </interactant>
    <interactant intactId="EBI-1202287">
        <id>Q64364</id>
        <label>Cdkn2a</label>
    </interactant>
    <organismsDiffer>true</organismsDiffer>
    <experiments>4</experiments>
</comment>
<comment type="interaction">
    <interactant intactId="EBI-347528">
        <id>Q07021</id>
    </interactant>
    <interactant intactId="EBI-6383633">
        <id>PRO_0000240177</id>
        <dbReference type="UniProtKB" id="O40955"/>
    </interactant>
    <organismsDiffer>true</organismsDiffer>
    <experiments>2</experiments>
</comment>
<comment type="interaction">
    <interactant intactId="EBI-347528">
        <id>Q07021</id>
    </interactant>
    <interactant intactId="EBI-6377932">
        <id>PRO_0000041308</id>
        <dbReference type="UniProtKB" id="P07566"/>
    </interactant>
    <organismsDiffer>true</organismsDiffer>
    <experiments>3</experiments>
</comment>
<comment type="interaction">
    <interactant intactId="EBI-347528">
        <id>Q07021</id>
    </interactant>
    <interactant intactId="EBI-11478341">
        <id>PRO_0000041302</id>
        <dbReference type="UniProtKB" id="P08563"/>
    </interactant>
    <organismsDiffer>true</organismsDiffer>
    <experiments>3</experiments>
</comment>
<comment type="interaction">
    <interactant intactId="EBI-347528">
        <id>Q07021</id>
    </interactant>
    <interactant intactId="EBI-6377335">
        <id>PRO_0000037566</id>
        <dbReference type="UniProtKB" id="P27958"/>
    </interactant>
    <organismsDiffer>true</organismsDiffer>
    <experiments>4</experiments>
</comment>
<comment type="interaction">
    <interactant intactId="EBI-14032968">
        <id>PRO_0000018590</id>
    </interactant>
    <interactant intactId="EBI-1220209">
        <id>P02745</id>
        <label>C1QA</label>
    </interactant>
    <organismsDiffer>false</organismsDiffer>
    <experiments>6</experiments>
</comment>
<comment type="interaction">
    <interactant intactId="EBI-14032968">
        <id>PRO_0000018590</id>
    </interactant>
    <interactant intactId="EBI-2813376">
        <id>P02746</id>
        <label>C1QB</label>
    </interactant>
    <organismsDiffer>false</organismsDiffer>
    <experiments>4</experiments>
</comment>
<comment type="interaction">
    <interactant intactId="EBI-14032968">
        <id>PRO_0000018590</id>
    </interactant>
    <interactant intactId="EBI-1220222">
        <id>P02747</id>
        <label>C1QC</label>
    </interactant>
    <organismsDiffer>false</organismsDiffer>
    <experiments>4</experiments>
</comment>
<comment type="interaction">
    <interactant intactId="EBI-14032968">
        <id>PRO_0000018590</id>
    </interactant>
    <interactant intactId="EBI-25475850">
        <id>P0DTC4</id>
        <label>E</label>
    </interactant>
    <organismsDiffer>true</organismsDiffer>
    <experiments>2</experiments>
</comment>
<comment type="interaction">
    <interactant intactId="EBI-14032968">
        <id>PRO_0000018590</id>
    </interactant>
    <interactant intactId="EBI-25474821">
        <id>P0DTC2</id>
        <label>S</label>
    </interactant>
    <organismsDiffer>true</organismsDiffer>
    <experiments>2</experiments>
</comment>
<comment type="subcellular location">
    <subcellularLocation>
        <location evidence="16 22 28 46">Mitochondrion matrix</location>
    </subcellularLocation>
    <subcellularLocation>
        <location evidence="26 45">Nucleus</location>
    </subcellularLocation>
    <subcellularLocation>
        <location evidence="31 37">Nucleus</location>
        <location evidence="31 37">Nucleolus</location>
    </subcellularLocation>
    <subcellularLocation>
        <location evidence="7 10 14 39 40 43 44">Cell membrane</location>
        <topology evidence="14 40 43">Peripheral membrane protein</topology>
        <orientation>Extracellular side</orientation>
    </subcellularLocation>
    <subcellularLocation>
        <location>Secreted</location>
    </subcellularLocation>
    <subcellularLocation>
        <location evidence="10 45">Cytoplasm</location>
    </subcellularLocation>
    <text evidence="37">Seems to be predominantly localized to mitochondria. Secreted by activated lymphocytes. Localizes to the nucleolus when coexpressed with POLGARF (PubMed:32958672). Interaction with POLGARF is likely to result in prevention of C1QBP maturation and redirection from mitochondria to nucleoli (PubMed:32958672).</text>
</comment>
<comment type="tissue specificity">
    <text evidence="14 40">Expressed on cell surface of peripheral blood cells (at protein level); Surface expression is reported for macrophages and monocyte-derived dendritic cells.</text>
</comment>
<comment type="induction">
    <text evidence="14 19">Enhanced cell surface expression upon platelet and monocyte activation.</text>
</comment>
<comment type="disease" evidence="35">
    <disease id="DI-05115">
        <name>Combined oxidative phosphorylation deficiency 33</name>
        <acronym>COXPD33</acronym>
        <description>An autosomal recessive disorder caused by multiple mitochondrial respiratory chain defects and impaired mitochondrial energy metabolism. Clinical manifestations are highly variable. Affected infants present with cardiomyopathy accompanied by multisystemic features involving liver, kidney, and brain. Death in infancy is observed in some patients. Children and adults present with myopathy and progressive external ophthalmoplegia.</description>
        <dbReference type="MIM" id="617713"/>
    </disease>
    <text>The disease is caused by variants affecting the gene represented in this entry.</text>
</comment>
<comment type="similarity">
    <text evidence="49">Belongs to the MAM33 family.</text>
</comment>
<comment type="caution">
    <text evidence="50 51">The subcellular location has been matter of debate. After being reported to be exclusively localized to mitochondria, demonstrations of promiscuous associations and locations were considered as artifactual due to the extremely acidic character and the use of different tagged versions of the protein (PubMed:11493647, PubMed:9305894). However, its location to multiple compartments linked to diverse functions is now accepted. The N-termini of the surface and secreted forms are identical to the reported processed mitochondrial form.</text>
</comment>
<keyword id="KW-0002">3D-structure</keyword>
<keyword id="KW-0007">Acetylation</keyword>
<keyword id="KW-1064">Adaptive immunity</keyword>
<keyword id="KW-0053">Apoptosis</keyword>
<keyword id="KW-1003">Cell membrane</keyword>
<keyword id="KW-0180">Complement pathway</keyword>
<keyword id="KW-0963">Cytoplasm</keyword>
<keyword id="KW-0903">Direct protein sequencing</keyword>
<keyword id="KW-0225">Disease variant</keyword>
<keyword id="KW-0227">DNA damage</keyword>
<keyword id="KW-0945">Host-virus interaction</keyword>
<keyword id="KW-0391">Immunity</keyword>
<keyword id="KW-0399">Innate immunity</keyword>
<keyword id="KW-0472">Membrane</keyword>
<keyword id="KW-0496">Mitochondrion</keyword>
<keyword id="KW-0507">mRNA processing</keyword>
<keyword id="KW-0508">mRNA splicing</keyword>
<keyword id="KW-0539">Nucleus</keyword>
<keyword id="KW-0597">Phosphoprotein</keyword>
<keyword id="KW-1274">Primary mitochondrial disease</keyword>
<keyword id="KW-1267">Proteomics identification</keyword>
<keyword id="KW-1185">Reference proteome</keyword>
<keyword id="KW-0690">Ribosome biogenesis</keyword>
<keyword id="KW-0964">Secreted</keyword>
<keyword id="KW-0804">Transcription</keyword>
<keyword id="KW-0805">Transcription regulation</keyword>
<keyword id="KW-0809">Transit peptide</keyword>
<gene>
    <name type="primary">C1QBP</name>
    <name type="synonym">GC1QBP</name>
    <name type="synonym">HABP1</name>
    <name type="synonym">SF2P32</name>
</gene>
<accession>Q07021</accession>
<accession>Q2HXR8</accession>
<accession>Q9NNY8</accession>
<reference key="1">
    <citation type="journal article" date="1993" name="Gene">
        <title>Cloning and expression of a cDNA covering the complete coding region of the P32 subunit of human pre-mRNA splicing factor SF2.</title>
        <authorList>
            <person name="Honore B."/>
            <person name="Madsen P."/>
            <person name="Rasmussen H.H."/>
            <person name="Vandekerckhove J."/>
            <person name="Celis J.E."/>
            <person name="Leffers H."/>
        </authorList>
    </citation>
    <scope>NUCLEOTIDE SEQUENCE [MRNA]</scope>
    <scope>PROTEIN SEQUENCE OF 74; 76-93 AND 208-216</scope>
    <source>
        <tissue>Fibroblast</tissue>
    </source>
</reference>
<reference key="2">
    <citation type="journal article" date="1994" name="J. Exp. Med.">
        <title>Isolation, cDNA cloning, and overexpression of a 33-kD cell surface glycoprotein that binds to the globular 'heads' of C1q.</title>
        <authorList>
            <person name="Ghebrehiwet B."/>
            <person name="Lim B.L."/>
            <person name="Peerschke E.I."/>
            <person name="Willis A.C."/>
            <person name="Reid K.B."/>
        </authorList>
    </citation>
    <scope>NUCLEOTIDE SEQUENCE [MRNA]</scope>
    <scope>PARTIAL PROTEIN SEQUENCE</scope>
    <scope>FUNCTION</scope>
    <scope>SUBCELLULAR LOCATION</scope>
</reference>
<reference key="3">
    <citation type="journal article" date="2001" name="J. Biol. Chem.">
        <title>The human gC1qR/p32 gene, C1qBP. Genomic organization and promoter analysis.</title>
        <authorList>
            <person name="Tye A.J."/>
            <person name="Ghebrehiwet B."/>
            <person name="Guo N."/>
            <person name="Sastry K.N."/>
            <person name="Chow B.K.C."/>
            <person name="Peerschke E.I.B."/>
            <person name="Lim B.L."/>
        </authorList>
    </citation>
    <scope>NUCLEOTIDE SEQUENCE [GENOMIC DNA]</scope>
</reference>
<reference key="4">
    <citation type="submission" date="2004-10" db="EMBL/GenBank/DDBJ databases">
        <title>Cloning of human full-length CDSs in BD Creator(TM) system donor vector.</title>
        <authorList>
            <person name="Kalnine N."/>
            <person name="Chen X."/>
            <person name="Rolfs A."/>
            <person name="Halleck A."/>
            <person name="Hines L."/>
            <person name="Eisenstein S."/>
            <person name="Koundinya M."/>
            <person name="Raphael J."/>
            <person name="Moreira D."/>
            <person name="Kelley T."/>
            <person name="LaBaer J."/>
            <person name="Lin Y."/>
            <person name="Phelan M."/>
            <person name="Farmer A."/>
        </authorList>
    </citation>
    <scope>NUCLEOTIDE SEQUENCE [LARGE SCALE MRNA]</scope>
</reference>
<reference key="5">
    <citation type="submission" date="2006-01" db="EMBL/GenBank/DDBJ databases">
        <authorList>
            <consortium name="SeattleSNPs variation discovery resource"/>
        </authorList>
    </citation>
    <scope>NUCLEOTIDE SEQUENCE [GENOMIC DNA]</scope>
</reference>
<reference key="6">
    <citation type="journal article" date="2004" name="Genome Res.">
        <title>The status, quality, and expansion of the NIH full-length cDNA project: the Mammalian Gene Collection (MGC).</title>
        <authorList>
            <consortium name="The MGC Project Team"/>
        </authorList>
    </citation>
    <scope>NUCLEOTIDE SEQUENCE [LARGE SCALE MRNA]</scope>
    <source>
        <tissue>Lung</tissue>
        <tissue>Ovary</tissue>
    </source>
</reference>
<reference key="7">
    <citation type="journal article" date="1991" name="Cell">
        <title>Functional expression of cloned human splicing factor SF2: homology to RNA-binding proteins, U1 70K, and Drosophila splicing regulators.</title>
        <authorList>
            <person name="Krainer A.R."/>
            <person name="Mayeda A."/>
            <person name="Kozak D."/>
            <person name="Binns G."/>
        </authorList>
    </citation>
    <scope>NUCLEOTIDE SEQUENCE [MRNA] OF 5-282</scope>
    <scope>PROTEIN SEQUENCE OF 74-114</scope>
</reference>
<reference key="8">
    <citation type="journal article" date="1996" name="J. Biol. Chem.">
        <title>Isolation and characterization of the kininogen-binding protein p33 from endothelial cells. Identity with the gC1q receptor.</title>
        <authorList>
            <person name="Herwald H."/>
            <person name="Dedio J."/>
            <person name="Kellner R."/>
            <person name="Loos M."/>
            <person name="Muller-Esterl W."/>
        </authorList>
    </citation>
    <scope>PROTEIN SEQUENCE OF 74-88</scope>
    <scope>FUNCTION</scope>
    <scope>SUBCELLULAR LOCATION</scope>
    <scope>TISSUE SPECIFICITY</scope>
</reference>
<reference key="9">
    <citation type="journal article" date="1996" name="J. Biol. Chem.">
        <title>Molecular cloning of human fibroblast hyaluronic acid-binding protein confirms its identity with P-32, a protein co-purified with splicing factor SF2. Hyaluronic acid-binding protein as P-32 protein, co-purified with splicing factor SF2.</title>
        <authorList>
            <person name="Deb T.B."/>
            <person name="Datta K."/>
        </authorList>
    </citation>
    <scope>NUCLEOTIDE SEQUENCE [MRNA] OF 86-282</scope>
</reference>
<reference key="10">
    <citation type="journal article" date="1996" name="J. Biol. Chem.">
        <title>The binding protein for globular heads of complement C1q, gC1qR. Functional expression and characterization as a novel vitronectin binding factor.</title>
        <authorList>
            <person name="Lim B.L."/>
            <person name="Reid K.B."/>
            <person name="Ghebrehiwet B."/>
            <person name="Peerschke E.I."/>
            <person name="Leigh L.A."/>
            <person name="Preissner K.T."/>
        </authorList>
    </citation>
    <scope>INTERACTION WITH VTN</scope>
</reference>
<reference key="11">
    <citation type="journal article" date="1996" name="Proc. Natl. Acad. Sci. U.S.A.">
        <title>Identification of the zinc-dependent endothelial cell binding protein for high molecular weight kininogen and factor XII: identity with the receptor that binds to the globular 'heads' of C1q (gC1q-R).</title>
        <authorList>
            <person name="Joseph K."/>
            <person name="Ghebrehiwet B."/>
            <person name="Peerschke E.I."/>
            <person name="Reid K.B."/>
            <person name="Kaplan A.P."/>
        </authorList>
    </citation>
    <scope>FUNCTION</scope>
</reference>
<reference key="12">
    <citation type="journal article" date="1997" name="Clin. Immunol. Immunopathol.">
        <title>The C1q-binding cell membrane proteins cC1q-R and gC1q-R are released from activated cells: subcellular distribution and immunochemical characterization.</title>
        <authorList>
            <person name="Peterson K.L."/>
            <person name="Zhang W."/>
            <person name="Lu P.D."/>
            <person name="Keilbaugh S.A."/>
            <person name="Peerschke E.I."/>
            <person name="Ghebrehiwet B."/>
        </authorList>
    </citation>
    <scope>SUBCELLULAR LOCATION</scope>
</reference>
<reference key="13">
    <citation type="journal article" date="1997" name="Virology">
        <title>P32/TAP, a cellular protein that interacts with EBNA-1 of Epstein-Barr virus.</title>
        <authorList>
            <person name="Wang Y."/>
            <person name="Finan J.E."/>
            <person name="Middeldorp J.M."/>
            <person name="Hayward S.D."/>
        </authorList>
    </citation>
    <scope>INTERACTION WITH EPSTEIN-BARR VIRUS EBNA1 (MICROBIAL INFECTION)</scope>
    <scope>SUBCELLULAR LOCATION</scope>
</reference>
<reference key="14">
    <citation type="journal article" date="1997" name="J. Biol. Chem.">
        <title>p32 protein, a splicing factor 2-associated protein, is localized in mitochondrial matrix and is functionally important in maintaining oxidative phosphorylation.</title>
        <authorList>
            <person name="Muta T."/>
            <person name="Kang D."/>
            <person name="Kitajima S."/>
            <person name="Fujiwara T."/>
            <person name="Hamasaki N."/>
        </authorList>
    </citation>
    <scope>SUBCELLULAR LOCATION</scope>
</reference>
<reference key="15">
    <citation type="journal article" date="1997" name="J. Immunol.">
        <title>Evidence that the two C1q binding membrane proteins, gC1q-R and cC1q-R, associate to form a complex.</title>
        <authorList>
            <person name="Ghebrehiwet B."/>
            <person name="Lu P.D."/>
            <person name="Zhang W."/>
            <person name="Keilbaugh S.A."/>
            <person name="Leigh L.E."/>
            <person name="Eggleton P."/>
            <person name="Reid K.B."/>
            <person name="Peerschke E.I."/>
        </authorList>
    </citation>
    <scope>INTERACTION WITH CD93</scope>
    <scope>SUBCELLULAR LOCATION</scope>
</reference>
<reference key="16">
    <citation type="journal article" date="1998" name="Biochem. J.">
        <title>C1q-mediated chemotaxis by human neutrophils: involvement of gClqR and G-protein signalling mechanisms.</title>
        <authorList>
            <person name="Leigh L.E."/>
            <person name="Ghebrehiwet B."/>
            <person name="Perera T.P."/>
            <person name="Bird I.N."/>
            <person name="Strong P."/>
            <person name="Kishore U."/>
            <person name="Reid K.B."/>
            <person name="Eggleton P."/>
        </authorList>
    </citation>
    <scope>FUNCTION</scope>
</reference>
<reference key="17">
    <citation type="journal article" date="1999" name="Clin. Immunol.">
        <title>Cytokeratin 1 and gC1qR mediate high molecular weight kininogen binding to endothelial cells.</title>
        <authorList>
            <person name="Joseph K."/>
            <person name="Ghebrehiwet B."/>
            <person name="Kaplan A.P."/>
        </authorList>
    </citation>
    <scope>FUNCTION</scope>
</reference>
<reference key="18">
    <citation type="journal article" date="1999" name="EMBO J.">
        <title>The splicing factor-associated protein, p32, regulates RNA splicing by inhibiting ASF/SF2 RNA binding and phosphorylation.</title>
        <authorList>
            <person name="Petersen-Mahrt S.K."/>
            <person name="Estmer C."/>
            <person name="Ohrmalm C."/>
            <person name="Matthews D.A."/>
            <person name="Russell W.C."/>
            <person name="Akusjarvi G."/>
        </authorList>
    </citation>
    <scope>FUNCTION</scope>
    <scope>INTERACTION WITH SRSF1 AND SRSF9</scope>
</reference>
<reference key="19">
    <citation type="journal article" date="2000" name="EMBO J.">
        <title>gC1q-R/p32, a C1q-binding protein, is a receptor for the InlB invasion protein of Listeria monocytogenes.</title>
        <authorList>
            <person name="Braun L."/>
            <person name="Ghebrehiwet B."/>
            <person name="Cossart P."/>
        </authorList>
    </citation>
    <scope>FUNCTION (MICROBIAL INFECTION)</scope>
    <scope>INTERACTION WITH L.MONOCYTOGENES INLB (MICROBIAL INFECTION)</scope>
    <scope>SUBCELLULAR LOCATION</scope>
</reference>
<reference key="20">
    <citation type="journal article" date="2000" name="Infect. Immun.">
        <title>Staphylococcus aureus protein A recognizes platelet gC1qR/p33: a novel mechanism for staphylococcal interactions with platelets.</title>
        <authorList>
            <person name="Nguyen T."/>
            <person name="Ghebrehiwet B."/>
            <person name="Peerschke E.I."/>
        </authorList>
    </citation>
    <scope>FUNCTION (MICROBIAL INFECTION)</scope>
    <scope>INTERACTION WITH STAPHYLOCOCCUS AUREUS SPA</scope>
</reference>
<reference key="21">
    <citation type="journal article" date="2000" name="J. Clin. Invest.">
        <title>Interaction between complement receptor gC1qR and hepatitis C virus core protein inhibits T-lymphocyte proliferation.</title>
        <authorList>
            <person name="Kittlesen D.J."/>
            <person name="Chianese-Bullock K.A."/>
            <person name="Yao Z.Q."/>
            <person name="Braciale T.J."/>
            <person name="Hahn Y.S."/>
        </authorList>
    </citation>
    <scope>FUNCTION</scope>
    <scope>INTERACTION WITH HCV CORE PROTEIN</scope>
</reference>
<reference key="22">
    <citation type="journal article" date="2000" name="J. Virol.">
        <title>Rubella virus capsid associates with host cell protein p32 and localizes to mitochondria.</title>
        <authorList>
            <person name="Beatch M.D."/>
            <person name="Hobman T.C."/>
        </authorList>
    </citation>
    <scope>INTERACTION WITH RUBELLA VIRUS CAPSID PROTEIN</scope>
</reference>
<reference key="23">
    <citation type="journal article" date="2001" name="J. Cell Sci.">
        <title>Retargeting of the mitochondrial protein p32/gC1Qr to a cytoplasmic compartment and the cell surface.</title>
        <authorList>
            <person name="van Leeuwen H.C."/>
            <person name="O'Hare P."/>
        </authorList>
    </citation>
    <scope>SUBCELLULAR LOCATION</scope>
</reference>
<reference key="24">
    <citation type="journal article" date="2002" name="EMBO J.">
        <title>GW domains of the Listeria monocytogenes invasion protein InlB are SH3-like and mediate binding to host ligands.</title>
        <authorList>
            <person name="Marino M."/>
            <person name="Banerjee M."/>
            <person name="Jonquieres R."/>
            <person name="Cossart P."/>
            <person name="Ghosh P."/>
        </authorList>
    </citation>
    <scope>FUNCTION (MICROBIAL INFECTION)</scope>
    <scope>INTERACTION WITH L.MONOCYTOGENES INLB (MICROBIAL INFECTION)</scope>
</reference>
<reference key="25">
    <citation type="journal article" date="2002" name="J. Immunol.">
        <title>Cooperation of C1q receptors and integrins in C1q-mediated endothelial cell adhesion and spreading.</title>
        <authorList>
            <person name="Feng X."/>
            <person name="Tonnesen M.G."/>
            <person name="Peerschke E.I."/>
            <person name="Ghebrehiwet B."/>
        </authorList>
    </citation>
    <scope>FUNCTION</scope>
</reference>
<reference key="26">
    <citation type="journal article" date="2002" name="Virus Res.">
        <title>The N-terminal conserved domain of rubella virus capsid interacts with the C-terminal region of cellular p32 and overexpression of p32 enhances the viral infectivity.</title>
        <authorList>
            <person name="Mohan K.V."/>
            <person name="Ghebrehiwet B."/>
            <person name="Atreya C.D."/>
        </authorList>
    </citation>
    <scope>FUNCTION (MICROBIAL INFECTION)</scope>
    <scope>INTERACTION WITH RUBELLA VIRUS CAPSID PROTEIN</scope>
</reference>
<reference key="27">
    <citation type="journal article" date="2003" name="Nat. Cell Biol.">
        <title>Human p32 protein relieves a post-transcriptional block to HIV replication in murine cells.</title>
        <authorList>
            <person name="Zheng Y.H."/>
            <person name="Yu H.F."/>
            <person name="Peterlin B.M."/>
        </authorList>
    </citation>
    <scope>FUNCTION (MICROBIAL INFECTION)</scope>
    <scope>MUTAGENESIS OF GLY-107</scope>
</reference>
<reference key="28">
    <citation type="journal article" date="2003" name="Nat. Cell Biol.">
        <authorList>
            <person name="Zheng Y.H."/>
            <person name="Yu H.F."/>
            <person name="Peterlin B.M."/>
        </authorList>
    </citation>
    <scope>ERRATUM OF PUBMED:12833064</scope>
</reference>
<reference key="29">
    <citation type="journal article" date="2003" name="Thromb. Haemost.">
        <title>Activation-dependent surface expression of gC1qR/p33 on human blood platelets.</title>
        <authorList>
            <person name="Peerschke E.I."/>
            <person name="Murphy T.K."/>
            <person name="Ghebrehiwet B."/>
        </authorList>
    </citation>
    <scope>SUBCELLULAR LOCATION</scope>
    <scope>TISSUE SPECIFICITY</scope>
    <scope>INDUCTION</scope>
</reference>
<reference key="30">
    <citation type="journal article" date="2004" name="Cell Death Differ.">
        <title>Physical and functional interaction between BH3-only protein Hrk and mitochondrial pore-forming protein p32.</title>
        <authorList>
            <person name="Sunayama J."/>
            <person name="Ando Y."/>
            <person name="Itoh N."/>
            <person name="Tomiyama A."/>
            <person name="Sakurada K."/>
            <person name="Sugiyama A."/>
            <person name="Kang D."/>
            <person name="Tashiro F."/>
            <person name="Gotoh Y."/>
            <person name="Kuchino Y."/>
            <person name="Kitanaka C."/>
        </authorList>
    </citation>
    <scope>INTERACTION WITH HRK</scope>
    <scope>SUBCELLULAR LOCATION</scope>
</reference>
<reference key="31">
    <citation type="journal article" date="2004" name="Nucleic Acids Res.">
        <title>Human p32, interacts with B subunit of the CCAAT-binding factor, CBF/NF-Y, and inhibits CBF-mediated transcription activation in vitro.</title>
        <authorList>
            <person name="Chattopadhyay C."/>
            <person name="Hawke D."/>
            <person name="Kobayashi R."/>
            <person name="Maity S.N."/>
        </authorList>
    </citation>
    <scope>FUNCTION</scope>
    <scope>INTERACTION WITH NFYB</scope>
</reference>
<reference key="32">
    <citation type="journal article" date="2005" name="J. Immunol.">
        <title>gC1q receptor ligation selectively down-regulates human IL-12 production through activation of the phosphoinositide 3-kinase pathway.</title>
        <authorList>
            <person name="Waggoner S.N."/>
            <person name="Cruise M.W."/>
            <person name="Kassel R."/>
            <person name="Hahn Y.S."/>
        </authorList>
    </citation>
    <scope>FUNCTION</scope>
    <scope>INDUCTION</scope>
</reference>
<reference key="33">
    <citation type="journal article" date="2007" name="J. Immunol.">
        <authorList>
            <person name="Waggoner S.N."/>
            <person name="Cruise M.W."/>
            <person name="Kassel R."/>
            <person name="Hahn Y.S."/>
        </authorList>
    </citation>
    <scope>ERRATUM OF PUBMED:16177118</scope>
</reference>
<reference key="34">
    <citation type="journal article" date="2006" name="J. Cell. Biochem.">
        <title>CDC2L5, a Cdk-like kinase with RS domain, interacts with the ASF/SF2-associated protein p32 and affects splicing in vivo.</title>
        <authorList>
            <person name="Even Y."/>
            <person name="Durieux S."/>
            <person name="Escande M.L."/>
            <person name="Lozano J.C."/>
            <person name="Peaucellier G."/>
            <person name="Weil D."/>
            <person name="Geneviere A.M."/>
        </authorList>
    </citation>
    <scope>INTERACTION WITH CDK13</scope>
</reference>
<reference key="35">
    <citation type="journal article" date="2006" name="J. Virol.">
        <title>Acetylated Tat regulates human immunodeficiency virus type 1 splicing through its interaction with the splicing regulator p32.</title>
        <authorList>
            <person name="Berro R."/>
            <person name="Kehn K."/>
            <person name="de la Fuente C."/>
            <person name="Pumfery A."/>
            <person name="Adair R."/>
            <person name="Wade J."/>
            <person name="Colberg-Poley A.M."/>
            <person name="Hiscott J."/>
            <person name="Kashanchi F."/>
        </authorList>
    </citation>
    <scope>INTERACTION WITH HIV-1 TAT</scope>
</reference>
<reference key="36">
    <citation type="journal article" date="2006" name="Mol. Immunol.">
        <title>Chemotaxis of human monocyte-derived dendritic cells to complement component C1q is mediated by the receptors gC1qR and cC1qR.</title>
        <authorList>
            <person name="Vegh Z."/>
            <person name="Kew R.R."/>
            <person name="Gruber B.L."/>
            <person name="Ghebrehiwet B."/>
        </authorList>
    </citation>
    <scope>FUNCTION</scope>
</reference>
<reference key="37">
    <citation type="journal article" date="2007" name="J. Leukoc. Biol.">
        <title>HCV core protein interaction with gC1q receptor inhibits Th1 differentiation of CD4+ T cells via suppression of dendritic cell IL-12 production.</title>
        <authorList>
            <person name="Waggoner S.N."/>
            <person name="Hall C.H."/>
            <person name="Hahn Y.S."/>
        </authorList>
    </citation>
    <scope>FUNCTION</scope>
</reference>
<reference key="38">
    <citation type="journal article" date="2007" name="Mol. Cell. Proteomics">
        <title>Quantitative phosphoproteome profiling of Wnt3a-mediated signaling network: indicating the involvement of ribonucleoside-diphosphate reductase M2 subunit phosphorylation at residue serine 20 in canonical Wnt signal transduction.</title>
        <authorList>
            <person name="Tang L.-Y."/>
            <person name="Deng N."/>
            <person name="Wang L.-S."/>
            <person name="Dai J."/>
            <person name="Wang Z.-L."/>
            <person name="Jiang X.-S."/>
            <person name="Li S.-J."/>
            <person name="Li L."/>
            <person name="Sheng Q.-H."/>
            <person name="Wu D.-Q."/>
            <person name="Li L."/>
            <person name="Zeng R."/>
        </authorList>
    </citation>
    <scope>PHOSPHORYLATION [LARGE SCALE ANALYSIS] AT TYR-188</scope>
    <scope>IDENTIFICATION BY MASS SPECTROMETRY [LARGE SCALE ANALYSIS]</scope>
    <source>
        <tissue>Embryonic kidney</tissue>
    </source>
</reference>
<reference key="39">
    <citation type="journal article" date="2007" name="Oncogene">
        <title>The autophagic inducer smARF interacts with and is stabilized by the mitochondrial p32 protein.</title>
        <authorList>
            <person name="Reef S."/>
            <person name="Shifman O."/>
            <person name="Oren M."/>
            <person name="Kimchi A."/>
        </authorList>
    </citation>
    <scope>INTERACTION WITH CDKN2A</scope>
    <scope>SUBCELLULAR LOCATION</scope>
</reference>
<reference key="40">
    <citation type="journal article" date="2008" name="Biochim. Biophys. Acta">
        <title>Novel tyrosine phosphorylated and cardiolipin-binding protein CLPABP functions as mitochondrial RNA granule.</title>
        <authorList>
            <person name="Sano E."/>
            <person name="Shono S."/>
            <person name="Tashiro K."/>
            <person name="Konishi H."/>
            <person name="Yamauchi E."/>
            <person name="Taniguchi H."/>
        </authorList>
    </citation>
    <scope>INTERACTION WITH PLEKHN1</scope>
</reference>
<reference key="41">
    <citation type="journal article" date="2008" name="Invest. Ophthalmol. Vis. Sci.">
        <title>Human p32 is a novel FOXC1-interacting protein that regulates FOXC1 transcriptional activity in ocular cells.</title>
        <authorList>
            <person name="Huang L."/>
            <person name="Chi J."/>
            <person name="Berry F.B."/>
            <person name="Footz T.K."/>
            <person name="Sharp M.W."/>
            <person name="Walter M.A."/>
        </authorList>
    </citation>
    <scope>FUNCTION</scope>
    <scope>INTERACTION WITH FOXC1</scope>
    <scope>SUBCELLULAR LOCATION</scope>
</reference>
<reference key="42">
    <citation type="journal article" date="2008" name="Proc. Natl. Acad. Sci. U.S.A.">
        <title>A quantitative atlas of mitotic phosphorylation.</title>
        <authorList>
            <person name="Dephoure N."/>
            <person name="Zhou C."/>
            <person name="Villen J."/>
            <person name="Beausoleil S.A."/>
            <person name="Bakalarski C.E."/>
            <person name="Elledge S.J."/>
            <person name="Gygi S.P."/>
        </authorList>
    </citation>
    <scope>PHOSPHORYLATION [LARGE SCALE ANALYSIS] AT SER-201</scope>
    <scope>IDENTIFICATION BY MASS SPECTROMETRY [LARGE SCALE ANALYSIS]</scope>
    <source>
        <tissue>Cervix carcinoma</tissue>
    </source>
</reference>
<reference key="43">
    <citation type="journal article" date="2009" name="J. Biol. Chem.">
        <title>Evidence for inhibitory interaction of hyaluronan-binding protein 1 (HABP1/p32/gC1qR) with Streptococcus pneumoniae hyaluronidase.</title>
        <authorList>
            <person name="Yadav G."/>
            <person name="Prasad R.L."/>
            <person name="Jha B.K."/>
            <person name="Rai V."/>
            <person name="Bhakuni V."/>
            <person name="Datta K."/>
        </authorList>
    </citation>
    <scope>FUNCTION</scope>
</reference>
<reference key="44">
    <citation type="journal article" date="2009" name="Proc. Natl. Acad. Sci. U.S.A.">
        <title>Inhibition of RIG-I and MDA5-dependent antiviral response by gC1qR at mitochondria.</title>
        <authorList>
            <person name="Xu L."/>
            <person name="Xiao N."/>
            <person name="Liu F."/>
            <person name="Ren H."/>
            <person name="Gu J."/>
        </authorList>
    </citation>
    <scope>FUNCTION</scope>
    <scope>SUBCELLULAR LOCATION</scope>
    <scope>INTERACTION WITH MAVS</scope>
</reference>
<reference key="45">
    <citation type="journal article" date="2009" name="Sci. Signal.">
        <title>Quantitative phosphoproteomic analysis of T cell receptor signaling reveals system-wide modulation of protein-protein interactions.</title>
        <authorList>
            <person name="Mayya V."/>
            <person name="Lundgren D.H."/>
            <person name="Hwang S.-I."/>
            <person name="Rezaul K."/>
            <person name="Wu L."/>
            <person name="Eng J.K."/>
            <person name="Rodionov V."/>
            <person name="Han D.K."/>
        </authorList>
    </citation>
    <scope>PHOSPHORYLATION [LARGE SCALE ANALYSIS] AT TYR-188</scope>
    <scope>IDENTIFICATION BY MASS SPECTROMETRY [LARGE SCALE ANALYSIS]</scope>
    <source>
        <tissue>Leukemic T-cell</tissue>
    </source>
</reference>
<reference key="46">
    <citation type="journal article" date="2009" name="Science">
        <title>Lysine acetylation targets protein complexes and co-regulates major cellular functions.</title>
        <authorList>
            <person name="Choudhary C."/>
            <person name="Kumar C."/>
            <person name="Gnad F."/>
            <person name="Nielsen M.L."/>
            <person name="Rehman M."/>
            <person name="Walther T.C."/>
            <person name="Olsen J.V."/>
            <person name="Mann M."/>
        </authorList>
    </citation>
    <scope>ACETYLATION [LARGE SCALE ANALYSIS] AT LYS-91</scope>
    <scope>IDENTIFICATION BY MASS SPECTROMETRY [LARGE SCALE ANALYSIS]</scope>
</reference>
<reference key="47">
    <citation type="journal article" date="2010" name="J. Immunol.">
        <title>An alternative role of C1q in cell migration and tissue remodeling: contribution to trophoblast invasion and placental development.</title>
        <authorList>
            <person name="Agostinis C."/>
            <person name="Bulla R."/>
            <person name="Tripodo C."/>
            <person name="Gismondi A."/>
            <person name="Stabile H."/>
            <person name="Bossi F."/>
            <person name="Guarnotta C."/>
            <person name="Garlanda C."/>
            <person name="De Seta F."/>
            <person name="Spessotto P."/>
            <person name="Santoni A."/>
            <person name="Ghebrehiwet B."/>
            <person name="Girardi G."/>
            <person name="Tedesco F."/>
        </authorList>
    </citation>
    <scope>FUNCTION</scope>
</reference>
<reference key="48">
    <citation type="journal article" date="2011" name="BMC Syst. Biol.">
        <title>Initial characterization of the human central proteome.</title>
        <authorList>
            <person name="Burkard T.R."/>
            <person name="Planyavsky M."/>
            <person name="Kaupe I."/>
            <person name="Breitwieser F.P."/>
            <person name="Buerckstuemmer T."/>
            <person name="Bennett K.L."/>
            <person name="Superti-Furga G."/>
            <person name="Colinge J."/>
        </authorList>
    </citation>
    <scope>IDENTIFICATION BY MASS SPECTROMETRY [LARGE SCALE ANALYSIS]</scope>
</reference>
<reference key="49">
    <citation type="journal article" date="2011" name="Biochem. J.">
        <title>Complement 1q-binding protein inhibits the mitochondrial permeability transition pore and protects against oxidative stress-induced death.</title>
        <authorList>
            <person name="McGee A.M."/>
            <person name="Baines C.P."/>
        </authorList>
    </citation>
    <scope>INTERACTION WITH PPIF</scope>
</reference>
<reference key="50">
    <citation type="journal article" date="2011" name="Mol. Cell. Proteomics">
        <title>Splicing factor 2-associated protein p32 participates in ribosome biogenesis by regulating the binding of Nop52 and fibrillarin to preribosome particles.</title>
        <authorList>
            <person name="Yoshikawa H."/>
            <person name="Komatsu W."/>
            <person name="Hayano T."/>
            <person name="Miura Y."/>
            <person name="Homma K."/>
            <person name="Izumikawa K."/>
            <person name="Ishikawa H."/>
            <person name="Miyazawa N."/>
            <person name="Tachikawa H."/>
            <person name="Yamauchi Y."/>
            <person name="Isobe T."/>
            <person name="Takahashi N."/>
        </authorList>
    </citation>
    <scope>FUNCTION</scope>
    <scope>SUBCELLULAR LOCATION</scope>
    <scope>INTERACTION WITH FBL; RRP1; DDX21; DDX50 AND NCL</scope>
</reference>
<reference key="51">
    <citation type="journal article" date="2011" name="Thromb. Haemost.">
        <title>Interaction of high-molecular-weight kininogen with endothelial cell binding proteins suPAR, gC1qR and cytokeratin 1 determined by surface plasmon resonance (BiaCore).</title>
        <authorList>
            <person name="Pixley R.A."/>
            <person name="Espinola R.G."/>
            <person name="Ghebrehiwet B."/>
            <person name="Joseph K."/>
            <person name="Kao A."/>
            <person name="Bdeir K."/>
            <person name="Cines D.B."/>
            <person name="Colman R.W."/>
        </authorList>
    </citation>
    <scope>FUNCTION</scope>
    <scope>INTERACTION WITH KRT1</scope>
</reference>
<reference key="52">
    <citation type="journal article" date="2012" name="Blood">
        <title>DC-SIGN, C1q, and gC1qR form a trimolecular receptor complex on the surface of monocyte-derived immature dendritic cells.</title>
        <authorList>
            <person name="Hosszu K.K."/>
            <person name="Valentino A."/>
            <person name="Vinayagasundaram U."/>
            <person name="Vinayagasundaram R."/>
            <person name="Joyce M.G."/>
            <person name="Ji Y."/>
            <person name="Peerschke E.I."/>
            <person name="Ghebrehiwet B."/>
        </authorList>
    </citation>
    <scope>FUNCTION</scope>
    <scope>INTERACTION WITH CD209</scope>
</reference>
<reference key="53">
    <citation type="journal article" date="2012" name="J. Gen. Virol.">
        <title>Binding of cellular p32 protein to the rubella virus P150 replicase protein via PxxPxR motifs.</title>
        <authorList>
            <person name="Suppiah S."/>
            <person name="Mousa H.A."/>
            <person name="Tzeng W.P."/>
            <person name="Matthews J.D."/>
            <person name="Frey T.K."/>
        </authorList>
    </citation>
    <scope>INTERACTION WITH RUBELLA VIRUS PROTEASE/METHYLTRANSFERASE P150</scope>
</reference>
<reference key="54">
    <citation type="journal article" date="2013" name="J. Proteome Res.">
        <title>Toward a comprehensive characterization of a human cancer cell phosphoproteome.</title>
        <authorList>
            <person name="Zhou H."/>
            <person name="Di Palma S."/>
            <person name="Preisinger C."/>
            <person name="Peng M."/>
            <person name="Polat A.N."/>
            <person name="Heck A.J."/>
            <person name="Mohammed S."/>
        </authorList>
    </citation>
    <scope>PHOSPHORYLATION [LARGE SCALE ANALYSIS] AT SER-87</scope>
    <scope>IDENTIFICATION BY MASS SPECTROMETRY [LARGE SCALE ANALYSIS]</scope>
    <source>
        <tissue>Erythroleukemia</tissue>
    </source>
</reference>
<reference key="55">
    <citation type="journal article" date="2014" name="J. Proteomics">
        <title>An enzyme assisted RP-RPLC approach for in-depth analysis of human liver phosphoproteome.</title>
        <authorList>
            <person name="Bian Y."/>
            <person name="Song C."/>
            <person name="Cheng K."/>
            <person name="Dong M."/>
            <person name="Wang F."/>
            <person name="Huang J."/>
            <person name="Sun D."/>
            <person name="Wang L."/>
            <person name="Ye M."/>
            <person name="Zou H."/>
        </authorList>
    </citation>
    <scope>PHOSPHORYLATION [LARGE SCALE ANALYSIS] AT SER-205 AND THR-214</scope>
    <scope>IDENTIFICATION BY MASS SPECTROMETRY [LARGE SCALE ANALYSIS]</scope>
    <source>
        <tissue>Liver</tissue>
    </source>
</reference>
<reference key="56">
    <citation type="journal article" date="2015" name="Proteomics">
        <title>N-terminome analysis of the human mitochondrial proteome.</title>
        <authorList>
            <person name="Vaca Jacome A.S."/>
            <person name="Rabilloud T."/>
            <person name="Schaeffer-Reiss C."/>
            <person name="Rompais M."/>
            <person name="Ayoub D."/>
            <person name="Lane L."/>
            <person name="Bairoch A."/>
            <person name="Van Dorsselaer A."/>
            <person name="Carapito C."/>
        </authorList>
    </citation>
    <scope>CLEAVAGE OF TRANSIT PEPTIDE [LARGE SCALE ANALYSIS] AFTER SER-73</scope>
    <scope>IDENTIFICATION BY MASS SPECTROMETRY [LARGE SCALE ANALYSIS]</scope>
</reference>
<reference key="57">
    <citation type="journal article" date="2020" name="Proc. Natl. Acad. Sci. U.S.A.">
        <title>Unusually efficient CUG initiation of an overlapping reading frame in POLG mRNA yields novel protein POLGARF.</title>
        <authorList>
            <person name="Loughran G."/>
            <person name="Zhdanov A.V."/>
            <person name="Mikhaylova M.S."/>
            <person name="Rozov F.N."/>
            <person name="Datskevich P.N."/>
            <person name="Kovalchuk S.I."/>
            <person name="Serebryakova M.V."/>
            <person name="Kiniry S.J."/>
            <person name="Michel A.M."/>
            <person name="O'Connor P.B.F."/>
            <person name="Papkovsky D.B."/>
            <person name="Atkins J.F."/>
            <person name="Baranov P.V."/>
            <person name="Shatsky I.N."/>
            <person name="Andreev D.E."/>
        </authorList>
    </citation>
    <scope>INTERACTION WITH POLGARF</scope>
    <scope>SUBCELLULAR LOCATION</scope>
    <scope>IDENTIFICATION BY MASS SPECTROMETRY</scope>
</reference>
<reference key="58">
    <citation type="journal article" date="2017" name="Am. J. Hum. Genet.">
        <title>Biallelic C1QBP mutations cause severe neonatal-, childhood-, or later-onset cardiomyopathy associated with combined respiratory-chain deficiencies.</title>
        <authorList>
            <person name="Feichtinger R.G."/>
            <person name="Olahova M."/>
            <person name="Kishita Y."/>
            <person name="Garone C."/>
            <person name="Kremer L.S."/>
            <person name="Yagi M."/>
            <person name="Uchiumi T."/>
            <person name="Jourdain A.A."/>
            <person name="Thompson K."/>
            <person name="D'Souza A.R."/>
            <person name="Kopajtich R."/>
            <person name="Alston C.L."/>
            <person name="Koch J."/>
            <person name="Sperl W."/>
            <person name="Mastantuono E."/>
            <person name="Strom T.M."/>
            <person name="Wortmann S.B."/>
            <person name="Meitinger T."/>
            <person name="Pierre G."/>
            <person name="Chinnery P.F."/>
            <person name="Chrzanowska-Lightowlers Z.M."/>
            <person name="Lightowlers R.N."/>
            <person name="DiMauro S."/>
            <person name="Calvo S.E."/>
            <person name="Mootha V.K."/>
            <person name="Moggio M."/>
            <person name="Sciacco M."/>
            <person name="Comi G.P."/>
            <person name="Ronchi D."/>
            <person name="Murayama K."/>
            <person name="Ohtake A."/>
            <person name="Rebelo-Guiomar P."/>
            <person name="Kohda M."/>
            <person name="Kang D."/>
            <person name="Mayr J.A."/>
            <person name="Taylor R.W."/>
            <person name="Okazaki Y."/>
            <person name="Minczuk M."/>
            <person name="Prokisch H."/>
        </authorList>
    </citation>
    <scope>FUNCTION</scope>
    <scope>INVOLVEMENT IN COXPD33</scope>
    <scope>VARIANTS COXPD33 SER-186; TYR-188 DEL; LEU-204; TRP-247; PHE-275 AND PRO-275</scope>
</reference>
<reference key="59">
    <citation type="journal article" date="2019" name="Mol. Cell">
        <title>C1QBP promotes homologous recombination by stabilizing MRE11 and controlling the assembly and activation of MRE11/RAD50/NBS1 complex.</title>
        <authorList>
            <person name="Bai Y."/>
            <person name="Wang W."/>
            <person name="Li S."/>
            <person name="Zhan J."/>
            <person name="Li H."/>
            <person name="Zhao M."/>
            <person name="Zhou X.A."/>
            <person name="Li S."/>
            <person name="Li X."/>
            <person name="Huo Y."/>
            <person name="Shen Q."/>
            <person name="Zhou M."/>
            <person name="Zhang H."/>
            <person name="Luo J."/>
            <person name="Sung P."/>
            <person name="Zhu W.G."/>
            <person name="Xu X."/>
            <person name="Wang J."/>
        </authorList>
    </citation>
    <scope>FUNCTION</scope>
    <scope>INTERACTION WITH MRE11 AND RAD50</scope>
</reference>
<reference key="60">
    <citation type="journal article" date="2024" name="Mol. Cell">
        <title>RNA 5-methylcytosine marks mitochondrial double-stranded RNAs for degradation and cytosolic release.</title>
        <authorList>
            <person name="Kim S."/>
            <person name="Tan S."/>
            <person name="Ku J."/>
            <person name="Widowati T.A."/>
            <person name="Ku D."/>
            <person name="Lee K."/>
            <person name="You K."/>
            <person name="Kim Y."/>
        </authorList>
    </citation>
    <scope>FUNCTION</scope>
</reference>
<reference key="61">
    <citation type="journal article" date="1999" name="Proc. Natl. Acad. Sci. U.S.A.">
        <title>Crystal structure of human p32, a doughnut-shaped acidic mitochondrial matrix protein.</title>
        <authorList>
            <person name="Jiang J."/>
            <person name="Zhang Y."/>
            <person name="Krainer A.R."/>
            <person name="Xu R.-M."/>
        </authorList>
    </citation>
    <scope>X-RAY CRYSTALLOGRAPHY (2.25 ANGSTROMS)</scope>
</reference>
<evidence type="ECO:0000250" key="1">
    <source>
        <dbReference type="UniProtKB" id="O35658"/>
    </source>
</evidence>
<evidence type="ECO:0000250" key="2">
    <source>
        <dbReference type="UniProtKB" id="O35796"/>
    </source>
</evidence>
<evidence type="ECO:0000256" key="3">
    <source>
        <dbReference type="SAM" id="MobiDB-lite"/>
    </source>
</evidence>
<evidence type="ECO:0000269" key="4">
    <source>
    </source>
</evidence>
<evidence type="ECO:0000269" key="5">
    <source>
    </source>
</evidence>
<evidence type="ECO:0000269" key="6">
    <source>
    </source>
</evidence>
<evidence type="ECO:0000269" key="7">
    <source>
    </source>
</evidence>
<evidence type="ECO:0000269" key="8">
    <source>
    </source>
</evidence>
<evidence type="ECO:0000269" key="9">
    <source>
    </source>
</evidence>
<evidence type="ECO:0000269" key="10">
    <source>
    </source>
</evidence>
<evidence type="ECO:0000269" key="11">
    <source>
    </source>
</evidence>
<evidence type="ECO:0000269" key="12">
    <source>
    </source>
</evidence>
<evidence type="ECO:0000269" key="13">
    <source>
    </source>
</evidence>
<evidence type="ECO:0000269" key="14">
    <source>
    </source>
</evidence>
<evidence type="ECO:0000269" key="15">
    <source>
    </source>
</evidence>
<evidence type="ECO:0000269" key="16">
    <source>
    </source>
</evidence>
<evidence type="ECO:0000269" key="17">
    <source>
    </source>
</evidence>
<evidence type="ECO:0000269" key="18">
    <source>
    </source>
</evidence>
<evidence type="ECO:0000269" key="19">
    <source>
    </source>
</evidence>
<evidence type="ECO:0000269" key="20">
    <source>
    </source>
</evidence>
<evidence type="ECO:0000269" key="21">
    <source>
    </source>
</evidence>
<evidence type="ECO:0000269" key="22">
    <source>
    </source>
</evidence>
<evidence type="ECO:0000269" key="23">
    <source>
    </source>
</evidence>
<evidence type="ECO:0000269" key="24">
    <source>
    </source>
</evidence>
<evidence type="ECO:0000269" key="25">
    <source>
    </source>
</evidence>
<evidence type="ECO:0000269" key="26">
    <source>
    </source>
</evidence>
<evidence type="ECO:0000269" key="27">
    <source>
    </source>
</evidence>
<evidence type="ECO:0000269" key="28">
    <source>
    </source>
</evidence>
<evidence type="ECO:0000269" key="29">
    <source>
    </source>
</evidence>
<evidence type="ECO:0000269" key="30">
    <source>
    </source>
</evidence>
<evidence type="ECO:0000269" key="31">
    <source>
    </source>
</evidence>
<evidence type="ECO:0000269" key="32">
    <source>
    </source>
</evidence>
<evidence type="ECO:0000269" key="33">
    <source>
    </source>
</evidence>
<evidence type="ECO:0000269" key="34">
    <source>
    </source>
</evidence>
<evidence type="ECO:0000269" key="35">
    <source>
    </source>
</evidence>
<evidence type="ECO:0000269" key="36">
    <source>
    </source>
</evidence>
<evidence type="ECO:0000269" key="37">
    <source>
    </source>
</evidence>
<evidence type="ECO:0000269" key="38">
    <source>
    </source>
</evidence>
<evidence type="ECO:0000269" key="39">
    <source>
    </source>
</evidence>
<evidence type="ECO:0000269" key="40">
    <source>
    </source>
</evidence>
<evidence type="ECO:0000269" key="41">
    <source>
    </source>
</evidence>
<evidence type="ECO:0000269" key="42">
    <source>
    </source>
</evidence>
<evidence type="ECO:0000269" key="43">
    <source>
    </source>
</evidence>
<evidence type="ECO:0000269" key="44">
    <source>
    </source>
</evidence>
<evidence type="ECO:0000269" key="45">
    <source>
    </source>
</evidence>
<evidence type="ECO:0000269" key="46">
    <source>
    </source>
</evidence>
<evidence type="ECO:0000269" key="47">
    <source>
    </source>
</evidence>
<evidence type="ECO:0000303" key="48">
    <source>
    </source>
</evidence>
<evidence type="ECO:0000305" key="49"/>
<evidence type="ECO:0000305" key="50">
    <source>
    </source>
</evidence>
<evidence type="ECO:0000305" key="51">
    <source>
    </source>
</evidence>
<evidence type="ECO:0007744" key="52">
    <source>
    </source>
</evidence>
<evidence type="ECO:0007744" key="53">
    <source>
    </source>
</evidence>
<evidence type="ECO:0007744" key="54">
    <source>
    </source>
</evidence>
<evidence type="ECO:0007744" key="55">
    <source>
    </source>
</evidence>
<evidence type="ECO:0007744" key="56">
    <source>
    </source>
</evidence>
<evidence type="ECO:0007744" key="57">
    <source>
    </source>
</evidence>
<evidence type="ECO:0007744" key="58">
    <source>
    </source>
</evidence>
<evidence type="ECO:0007829" key="59">
    <source>
        <dbReference type="PDB" id="1P32"/>
    </source>
</evidence>
<evidence type="ECO:0007829" key="60">
    <source>
        <dbReference type="PDB" id="3RPX"/>
    </source>
</evidence>
<evidence type="ECO:0007829" key="61">
    <source>
        <dbReference type="PDB" id="6SZW"/>
    </source>
</evidence>
<evidence type="ECO:0007829" key="62">
    <source>
        <dbReference type="PDB" id="7TE3"/>
    </source>
</evidence>
<proteinExistence type="evidence at protein level"/>
<dbReference type="EMBL" id="L04636">
    <property type="protein sequence ID" value="AAA16315.1"/>
    <property type="molecule type" value="mRNA"/>
</dbReference>
<dbReference type="EMBL" id="X75913">
    <property type="protein sequence ID" value="CAA53512.1"/>
    <property type="molecule type" value="mRNA"/>
</dbReference>
<dbReference type="EMBL" id="AF338439">
    <property type="protein sequence ID" value="AAK26580.1"/>
    <property type="molecule type" value="Genomic_DNA"/>
</dbReference>
<dbReference type="EMBL" id="BT019898">
    <property type="protein sequence ID" value="AAV38701.1"/>
    <property type="molecule type" value="mRNA"/>
</dbReference>
<dbReference type="EMBL" id="BT019899">
    <property type="protein sequence ID" value="AAV38702.1"/>
    <property type="molecule type" value="mRNA"/>
</dbReference>
<dbReference type="EMBL" id="DQ372108">
    <property type="protein sequence ID" value="ABC79624.1"/>
    <property type="molecule type" value="Genomic_DNA"/>
</dbReference>
<dbReference type="EMBL" id="BC000435">
    <property type="protein sequence ID" value="AAH00435.1"/>
    <property type="molecule type" value="mRNA"/>
</dbReference>
<dbReference type="EMBL" id="BC013731">
    <property type="protein sequence ID" value="AAH13731.1"/>
    <property type="molecule type" value="mRNA"/>
</dbReference>
<dbReference type="EMBL" id="M69039">
    <property type="protein sequence ID" value="AAA73055.1"/>
    <property type="molecule type" value="mRNA"/>
</dbReference>
<dbReference type="EMBL" id="AF275902">
    <property type="protein sequence ID" value="AAF78763.1"/>
    <property type="molecule type" value="mRNA"/>
</dbReference>
<dbReference type="CCDS" id="CCDS11071.1"/>
<dbReference type="PIR" id="JT0762">
    <property type="entry name" value="JT0762"/>
</dbReference>
<dbReference type="RefSeq" id="NP_001203.1">
    <property type="nucleotide sequence ID" value="NM_001212.4"/>
</dbReference>
<dbReference type="PDB" id="1P32">
    <property type="method" value="X-ray"/>
    <property type="resolution" value="2.25 A"/>
    <property type="chains" value="A/B/C=74-282"/>
</dbReference>
<dbReference type="PDB" id="3RPX">
    <property type="method" value="X-ray"/>
    <property type="resolution" value="2.65 A"/>
    <property type="chains" value="A/B/C=96-282"/>
</dbReference>
<dbReference type="PDB" id="6SZW">
    <property type="method" value="X-ray"/>
    <property type="resolution" value="3.14 A"/>
    <property type="chains" value="A/B/C=74-282"/>
</dbReference>
<dbReference type="PDB" id="7TE3">
    <property type="method" value="X-ray"/>
    <property type="resolution" value="2.20 A"/>
    <property type="chains" value="A=75-282"/>
</dbReference>
<dbReference type="PDBsum" id="1P32"/>
<dbReference type="PDBsum" id="3RPX"/>
<dbReference type="PDBsum" id="6SZW"/>
<dbReference type="PDBsum" id="7TE3"/>
<dbReference type="SMR" id="Q07021"/>
<dbReference type="BioGRID" id="107169">
    <property type="interactions" value="855"/>
</dbReference>
<dbReference type="CORUM" id="Q07021"/>
<dbReference type="DIP" id="DIP-31164N"/>
<dbReference type="FunCoup" id="Q07021">
    <property type="interactions" value="2945"/>
</dbReference>
<dbReference type="IntAct" id="Q07021">
    <property type="interactions" value="352"/>
</dbReference>
<dbReference type="MINT" id="Q07021"/>
<dbReference type="STRING" id="9606.ENSP00000225698"/>
<dbReference type="DrugBank" id="DB09130">
    <property type="generic name" value="Copper"/>
</dbReference>
<dbReference type="DrugBank" id="DB08818">
    <property type="generic name" value="Hyaluronic acid"/>
</dbReference>
<dbReference type="TCDB" id="9.B.103.1.1">
    <property type="family name" value="the putative ca(2+) uniporter (gc1qr) family"/>
</dbReference>
<dbReference type="GlyGen" id="Q07021">
    <property type="glycosylation" value="2 sites, 1 N-linked glycan (1 site), 1 O-linked glycan (1 site)"/>
</dbReference>
<dbReference type="iPTMnet" id="Q07021"/>
<dbReference type="PhosphoSitePlus" id="Q07021"/>
<dbReference type="SwissPalm" id="Q07021"/>
<dbReference type="BioMuta" id="C1QBP"/>
<dbReference type="DMDM" id="730772"/>
<dbReference type="OGP" id="Q07021"/>
<dbReference type="CPTAC" id="CPTAC-176"/>
<dbReference type="jPOST" id="Q07021"/>
<dbReference type="MassIVE" id="Q07021"/>
<dbReference type="PaxDb" id="9606-ENSP00000225698"/>
<dbReference type="PeptideAtlas" id="Q07021"/>
<dbReference type="ProteomicsDB" id="58500"/>
<dbReference type="Pumba" id="Q07021"/>
<dbReference type="TopDownProteomics" id="Q07021"/>
<dbReference type="Antibodypedia" id="11562">
    <property type="antibodies" value="574 antibodies from 38 providers"/>
</dbReference>
<dbReference type="DNASU" id="708"/>
<dbReference type="Ensembl" id="ENST00000225698.8">
    <property type="protein sequence ID" value="ENSP00000225698.4"/>
    <property type="gene ID" value="ENSG00000108561.8"/>
</dbReference>
<dbReference type="GeneID" id="708"/>
<dbReference type="KEGG" id="hsa:708"/>
<dbReference type="MANE-Select" id="ENST00000225698.8">
    <property type="protein sequence ID" value="ENSP00000225698.4"/>
    <property type="RefSeq nucleotide sequence ID" value="NM_001212.4"/>
    <property type="RefSeq protein sequence ID" value="NP_001203.1"/>
</dbReference>
<dbReference type="UCSC" id="uc002gby.2">
    <property type="organism name" value="human"/>
</dbReference>
<dbReference type="AGR" id="HGNC:1243"/>
<dbReference type="CTD" id="708"/>
<dbReference type="DisGeNET" id="708"/>
<dbReference type="GeneCards" id="C1QBP"/>
<dbReference type="HGNC" id="HGNC:1243">
    <property type="gene designation" value="C1QBP"/>
</dbReference>
<dbReference type="HPA" id="ENSG00000108561">
    <property type="expression patterns" value="Low tissue specificity"/>
</dbReference>
<dbReference type="MalaCards" id="C1QBP"/>
<dbReference type="MIM" id="601269">
    <property type="type" value="gene"/>
</dbReference>
<dbReference type="MIM" id="617713">
    <property type="type" value="phenotype"/>
</dbReference>
<dbReference type="neXtProt" id="NX_Q07021"/>
<dbReference type="OpenTargets" id="ENSG00000108561"/>
<dbReference type="PharmGKB" id="PA25624"/>
<dbReference type="VEuPathDB" id="HostDB:ENSG00000108561"/>
<dbReference type="eggNOG" id="KOG4024">
    <property type="taxonomic scope" value="Eukaryota"/>
</dbReference>
<dbReference type="GeneTree" id="ENSGT00390000018406"/>
<dbReference type="InParanoid" id="Q07021"/>
<dbReference type="OMA" id="YEHTAYV"/>
<dbReference type="OrthoDB" id="278212at2759"/>
<dbReference type="PAN-GO" id="Q07021">
    <property type="GO annotations" value="9 GO annotations based on evolutionary models"/>
</dbReference>
<dbReference type="PhylomeDB" id="Q07021"/>
<dbReference type="TreeFam" id="TF315160"/>
<dbReference type="PathwayCommons" id="Q07021"/>
<dbReference type="Reactome" id="R-HSA-111471">
    <property type="pathway name" value="Apoptotic factor-mediated response"/>
</dbReference>
<dbReference type="Reactome" id="R-HSA-140837">
    <property type="pathway name" value="Intrinsic Pathway of Fibrin Clot Formation"/>
</dbReference>
<dbReference type="Reactome" id="R-HSA-8980692">
    <property type="pathway name" value="RHOA GTPase cycle"/>
</dbReference>
<dbReference type="Reactome" id="R-HSA-9013106">
    <property type="pathway name" value="RHOC GTPase cycle"/>
</dbReference>
<dbReference type="Reactome" id="R-HSA-9645722">
    <property type="pathway name" value="Defective Intrinsic Pathway for Apoptosis Due to p14ARF Loss of Function"/>
</dbReference>
<dbReference type="SignaLink" id="Q07021"/>
<dbReference type="SIGNOR" id="Q07021"/>
<dbReference type="BioGRID-ORCS" id="708">
    <property type="hits" value="240 hits in 1161 CRISPR screens"/>
</dbReference>
<dbReference type="CD-CODE" id="232F8A39">
    <property type="entry name" value="P-body"/>
</dbReference>
<dbReference type="CD-CODE" id="FB4E32DD">
    <property type="entry name" value="Presynaptic clusters and postsynaptic densities"/>
</dbReference>
<dbReference type="ChiTaRS" id="C1QBP">
    <property type="organism name" value="human"/>
</dbReference>
<dbReference type="EvolutionaryTrace" id="Q07021"/>
<dbReference type="GeneWiki" id="C1QBP"/>
<dbReference type="GenomeRNAi" id="708"/>
<dbReference type="Pharos" id="Q07021">
    <property type="development level" value="Tbio"/>
</dbReference>
<dbReference type="PRO" id="PR:Q07021"/>
<dbReference type="Proteomes" id="UP000005640">
    <property type="component" value="Chromosome 17"/>
</dbReference>
<dbReference type="RNAct" id="Q07021">
    <property type="molecule type" value="protein"/>
</dbReference>
<dbReference type="Bgee" id="ENSG00000108561">
    <property type="expression patterns" value="Expressed in mucosa of transverse colon and 205 other cell types or tissues"/>
</dbReference>
<dbReference type="ExpressionAtlas" id="Q07021">
    <property type="expression patterns" value="baseline and differential"/>
</dbReference>
<dbReference type="GO" id="GO:0009986">
    <property type="term" value="C:cell surface"/>
    <property type="evidence" value="ECO:0000314"/>
    <property type="project" value="UniProtKB"/>
</dbReference>
<dbReference type="GO" id="GO:0005737">
    <property type="term" value="C:cytoplasm"/>
    <property type="evidence" value="ECO:0000250"/>
    <property type="project" value="UniProtKB"/>
</dbReference>
<dbReference type="GO" id="GO:0005829">
    <property type="term" value="C:cytosol"/>
    <property type="evidence" value="ECO:0000314"/>
    <property type="project" value="UniProtKB"/>
</dbReference>
<dbReference type="GO" id="GO:0005615">
    <property type="term" value="C:extracellular space"/>
    <property type="evidence" value="ECO:0007669"/>
    <property type="project" value="Ensembl"/>
</dbReference>
<dbReference type="GO" id="GO:0098982">
    <property type="term" value="C:GABA-ergic synapse"/>
    <property type="evidence" value="ECO:0007669"/>
    <property type="project" value="Ensembl"/>
</dbReference>
<dbReference type="GO" id="GO:0098978">
    <property type="term" value="C:glutamatergic synapse"/>
    <property type="evidence" value="ECO:0007669"/>
    <property type="project" value="Ensembl"/>
</dbReference>
<dbReference type="GO" id="GO:0016020">
    <property type="term" value="C:membrane"/>
    <property type="evidence" value="ECO:0000314"/>
    <property type="project" value="UniProtKB"/>
</dbReference>
<dbReference type="GO" id="GO:0005759">
    <property type="term" value="C:mitochondrial matrix"/>
    <property type="evidence" value="ECO:0000314"/>
    <property type="project" value="FlyBase"/>
</dbReference>
<dbReference type="GO" id="GO:0005739">
    <property type="term" value="C:mitochondrion"/>
    <property type="evidence" value="ECO:0000314"/>
    <property type="project" value="UniProtKB"/>
</dbReference>
<dbReference type="GO" id="GO:0005730">
    <property type="term" value="C:nucleolus"/>
    <property type="evidence" value="ECO:0007669"/>
    <property type="project" value="UniProtKB-SubCell"/>
</dbReference>
<dbReference type="GO" id="GO:0005634">
    <property type="term" value="C:nucleus"/>
    <property type="evidence" value="ECO:0000314"/>
    <property type="project" value="UniProtKB"/>
</dbReference>
<dbReference type="GO" id="GO:0005886">
    <property type="term" value="C:plasma membrane"/>
    <property type="evidence" value="ECO:0000314"/>
    <property type="project" value="HPA"/>
</dbReference>
<dbReference type="GO" id="GO:0048786">
    <property type="term" value="C:presynaptic active zone"/>
    <property type="evidence" value="ECO:0007669"/>
    <property type="project" value="Ensembl"/>
</dbReference>
<dbReference type="GO" id="GO:0031690">
    <property type="term" value="F:adrenergic receptor binding"/>
    <property type="evidence" value="ECO:0000250"/>
    <property type="project" value="UniProtKB"/>
</dbReference>
<dbReference type="GO" id="GO:0062153">
    <property type="term" value="F:C5-methylcytidine-containing RNA reader activity"/>
    <property type="evidence" value="ECO:0000314"/>
    <property type="project" value="FlyBase"/>
</dbReference>
<dbReference type="GO" id="GO:0001849">
    <property type="term" value="F:complement component C1q complex binding"/>
    <property type="evidence" value="ECO:0000314"/>
    <property type="project" value="UniProtKB"/>
</dbReference>
<dbReference type="GO" id="GO:0060703">
    <property type="term" value="F:deoxyribonuclease inhibitor activity"/>
    <property type="evidence" value="ECO:0000314"/>
    <property type="project" value="UniProt"/>
</dbReference>
<dbReference type="GO" id="GO:0004857">
    <property type="term" value="F:enzyme inhibitor activity"/>
    <property type="evidence" value="ECO:0000314"/>
    <property type="project" value="UniProtKB"/>
</dbReference>
<dbReference type="GO" id="GO:0005540">
    <property type="term" value="F:hyaluronic acid binding"/>
    <property type="evidence" value="ECO:0000314"/>
    <property type="project" value="UniProtKB"/>
</dbReference>
<dbReference type="GO" id="GO:0030984">
    <property type="term" value="F:kininogen binding"/>
    <property type="evidence" value="ECO:0000314"/>
    <property type="project" value="UniProtKB"/>
</dbReference>
<dbReference type="GO" id="GO:0097177">
    <property type="term" value="F:mitochondrial ribosome binding"/>
    <property type="evidence" value="ECO:0000250"/>
    <property type="project" value="UniProtKB"/>
</dbReference>
<dbReference type="GO" id="GO:0003729">
    <property type="term" value="F:mRNA binding"/>
    <property type="evidence" value="ECO:0000250"/>
    <property type="project" value="UniProtKB"/>
</dbReference>
<dbReference type="GO" id="GO:0005080">
    <property type="term" value="F:protein kinase C binding"/>
    <property type="evidence" value="ECO:0007669"/>
    <property type="project" value="Ensembl"/>
</dbReference>
<dbReference type="GO" id="GO:0003714">
    <property type="term" value="F:transcription corepressor activity"/>
    <property type="evidence" value="ECO:0000314"/>
    <property type="project" value="UniProtKB"/>
</dbReference>
<dbReference type="GO" id="GO:0008134">
    <property type="term" value="F:transcription factor binding"/>
    <property type="evidence" value="ECO:0000314"/>
    <property type="project" value="UniProtKB"/>
</dbReference>
<dbReference type="GO" id="GO:0006915">
    <property type="term" value="P:apoptotic process"/>
    <property type="evidence" value="ECO:0007669"/>
    <property type="project" value="UniProtKB-KW"/>
</dbReference>
<dbReference type="GO" id="GO:0006958">
    <property type="term" value="P:complement activation, classical pathway"/>
    <property type="evidence" value="ECO:0007669"/>
    <property type="project" value="UniProtKB-KW"/>
</dbReference>
<dbReference type="GO" id="GO:0042256">
    <property type="term" value="P:cytosolic ribosome assembly"/>
    <property type="evidence" value="ECO:0000315"/>
    <property type="project" value="UniProtKB"/>
</dbReference>
<dbReference type="GO" id="GO:0006974">
    <property type="term" value="P:DNA damage response"/>
    <property type="evidence" value="ECO:0007669"/>
    <property type="project" value="UniProtKB-KW"/>
</dbReference>
<dbReference type="GO" id="GO:0006955">
    <property type="term" value="P:immune response"/>
    <property type="evidence" value="ECO:0000304"/>
    <property type="project" value="ProtInc"/>
</dbReference>
<dbReference type="GO" id="GO:0045087">
    <property type="term" value="P:innate immune response"/>
    <property type="evidence" value="ECO:0007669"/>
    <property type="project" value="UniProtKB-KW"/>
</dbReference>
<dbReference type="GO" id="GO:0000957">
    <property type="term" value="P:mitochondrial RNA catabolic process"/>
    <property type="evidence" value="ECO:0000314"/>
    <property type="project" value="FlyBase"/>
</dbReference>
<dbReference type="GO" id="GO:0006397">
    <property type="term" value="P:mRNA processing"/>
    <property type="evidence" value="ECO:0007669"/>
    <property type="project" value="UniProtKB-KW"/>
</dbReference>
<dbReference type="GO" id="GO:0050687">
    <property type="term" value="P:negative regulation of defense response to virus"/>
    <property type="evidence" value="ECO:0000315"/>
    <property type="project" value="UniProtKB"/>
</dbReference>
<dbReference type="GO" id="GO:2000042">
    <property type="term" value="P:negative regulation of double-strand break repair via homologous recombination"/>
    <property type="evidence" value="ECO:0000314"/>
    <property type="project" value="UniProtKB"/>
</dbReference>
<dbReference type="GO" id="GO:0032695">
    <property type="term" value="P:negative regulation of interleukin-12 production"/>
    <property type="evidence" value="ECO:0000314"/>
    <property type="project" value="UniProtKB"/>
</dbReference>
<dbReference type="GO" id="GO:0039534">
    <property type="term" value="P:negative regulation of MDA-5 signaling pathway"/>
    <property type="evidence" value="ECO:0000314"/>
    <property type="project" value="UniProtKB"/>
</dbReference>
<dbReference type="GO" id="GO:0048025">
    <property type="term" value="P:negative regulation of mRNA splicing, via spliceosome"/>
    <property type="evidence" value="ECO:0000314"/>
    <property type="project" value="UniProtKB"/>
</dbReference>
<dbReference type="GO" id="GO:0039536">
    <property type="term" value="P:negative regulation of RIG-I signaling pathway"/>
    <property type="evidence" value="ECO:0000314"/>
    <property type="project" value="UniProtKB"/>
</dbReference>
<dbReference type="GO" id="GO:0000122">
    <property type="term" value="P:negative regulation of transcription by RNA polymerase II"/>
    <property type="evidence" value="ECO:0000314"/>
    <property type="project" value="UniProtKB"/>
</dbReference>
<dbReference type="GO" id="GO:0032689">
    <property type="term" value="P:negative regulation of type II interferon production"/>
    <property type="evidence" value="ECO:0000314"/>
    <property type="project" value="UniProtKB"/>
</dbReference>
<dbReference type="GO" id="GO:0043491">
    <property type="term" value="P:phosphatidylinositol 3-kinase/protein kinase B signal transduction"/>
    <property type="evidence" value="ECO:0000315"/>
    <property type="project" value="UniProtKB"/>
</dbReference>
<dbReference type="GO" id="GO:0043065">
    <property type="term" value="P:positive regulation of apoptotic process"/>
    <property type="evidence" value="ECO:0000315"/>
    <property type="project" value="UniProtKB"/>
</dbReference>
<dbReference type="GO" id="GO:0045785">
    <property type="term" value="P:positive regulation of cell adhesion"/>
    <property type="evidence" value="ECO:0000315"/>
    <property type="project" value="UniProtKB"/>
</dbReference>
<dbReference type="GO" id="GO:2000510">
    <property type="term" value="P:positive regulation of dendritic cell chemotaxis"/>
    <property type="evidence" value="ECO:0000315"/>
    <property type="project" value="UniProtKB"/>
</dbReference>
<dbReference type="GO" id="GO:0070131">
    <property type="term" value="P:positive regulation of mitochondrial translation"/>
    <property type="evidence" value="ECO:0000250"/>
    <property type="project" value="UniProtKB"/>
</dbReference>
<dbReference type="GO" id="GO:0090023">
    <property type="term" value="P:positive regulation of neutrophil chemotaxis"/>
    <property type="evidence" value="ECO:0000314"/>
    <property type="project" value="UniProtKB"/>
</dbReference>
<dbReference type="GO" id="GO:0051897">
    <property type="term" value="P:positive regulation of phosphatidylinositol 3-kinase/protein kinase B signal transduction"/>
    <property type="evidence" value="ECO:0000315"/>
    <property type="project" value="UniProtKB"/>
</dbReference>
<dbReference type="GO" id="GO:1900026">
    <property type="term" value="P:positive regulation of substrate adhesion-dependent cell spreading"/>
    <property type="evidence" value="ECO:0000315"/>
    <property type="project" value="UniProtKB"/>
</dbReference>
<dbReference type="GO" id="GO:1901165">
    <property type="term" value="P:positive regulation of trophoblast cell migration"/>
    <property type="evidence" value="ECO:0000315"/>
    <property type="project" value="UniProtKB"/>
</dbReference>
<dbReference type="GO" id="GO:0030449">
    <property type="term" value="P:regulation of complement activation"/>
    <property type="evidence" value="ECO:0000314"/>
    <property type="project" value="UniProtKB"/>
</dbReference>
<dbReference type="GO" id="GO:0008380">
    <property type="term" value="P:RNA splicing"/>
    <property type="evidence" value="ECO:0007669"/>
    <property type="project" value="UniProtKB-KW"/>
</dbReference>
<dbReference type="FunFam" id="3.10.280.10:FF:000001">
    <property type="entry name" value="Complement component 1 Q subcomponent-binding protein, mitochondrial"/>
    <property type="match status" value="1"/>
</dbReference>
<dbReference type="Gene3D" id="3.10.280.10">
    <property type="entry name" value="Mitochondrial glycoprotein"/>
    <property type="match status" value="1"/>
</dbReference>
<dbReference type="InterPro" id="IPR003428">
    <property type="entry name" value="MAM33"/>
</dbReference>
<dbReference type="InterPro" id="IPR036561">
    <property type="entry name" value="MAM33_sf"/>
</dbReference>
<dbReference type="PANTHER" id="PTHR10826">
    <property type="entry name" value="COMPLEMENT COMPONENT 1"/>
    <property type="match status" value="1"/>
</dbReference>
<dbReference type="PANTHER" id="PTHR10826:SF1">
    <property type="entry name" value="COMPLEMENT COMPONENT 1 Q SUBCOMPONENT-BINDING PROTEIN, MITOCHONDRIAL"/>
    <property type="match status" value="1"/>
</dbReference>
<dbReference type="Pfam" id="PF02330">
    <property type="entry name" value="MAM33"/>
    <property type="match status" value="1"/>
</dbReference>
<dbReference type="SUPFAM" id="SSF54529">
    <property type="entry name" value="Mitochondrial glycoprotein MAM33-like"/>
    <property type="match status" value="1"/>
</dbReference>
<organism>
    <name type="scientific">Homo sapiens</name>
    <name type="common">Human</name>
    <dbReference type="NCBI Taxonomy" id="9606"/>
    <lineage>
        <taxon>Eukaryota</taxon>
        <taxon>Metazoa</taxon>
        <taxon>Chordata</taxon>
        <taxon>Craniata</taxon>
        <taxon>Vertebrata</taxon>
        <taxon>Euteleostomi</taxon>
        <taxon>Mammalia</taxon>
        <taxon>Eutheria</taxon>
        <taxon>Euarchontoglires</taxon>
        <taxon>Primates</taxon>
        <taxon>Haplorrhini</taxon>
        <taxon>Catarrhini</taxon>
        <taxon>Hominidae</taxon>
        <taxon>Homo</taxon>
    </lineage>
</organism>
<sequence>MLPLLRCVPRVLGSSVAGLRAAAPASPFRQLLQPAPRLCTRPFGLLSVRAGSERRPGLLRPRGPCACGCGCGSLHTDGDKAFVDFLSDEIKEERKIQKHKTLPKMSGGWELELNGTEAKLVRKVAGEKITVTFNINNSIPPTFDGEEEPSQGQKVEEQEPELTSTPNFVVEVIKNDDGKKALVLDCHYPEDEVGQEDEAESDIFSIREVSFQSTGESEWKDTNYTLNTDSLDWALYDHLMDFLADRGVDNTFADELVELSTALEHQEYITFLEDLKSFVKSQ</sequence>
<name>C1QBP_HUMAN</name>
<protein>
    <recommendedName>
        <fullName>Complement component 1 Q subcomponent-binding protein, mitochondrial</fullName>
    </recommendedName>
    <alternativeName>
        <fullName>ASF/SF2-associated protein p32</fullName>
    </alternativeName>
    <alternativeName>
        <fullName>Glycoprotein gC1qBP</fullName>
        <shortName>C1qBP</shortName>
    </alternativeName>
    <alternativeName>
        <fullName>Hyaluronan-binding protein 1</fullName>
    </alternativeName>
    <alternativeName>
        <fullName>Mitochondrial matrix protein p32</fullName>
    </alternativeName>
    <alternativeName>
        <fullName>gC1q-R protein</fullName>
    </alternativeName>
    <alternativeName>
        <fullName>p33</fullName>
        <shortName evidence="48">SF2AP32</shortName>
    </alternativeName>
</protein>